<dbReference type="EC" id="3.-.-.-" evidence="1"/>
<dbReference type="EMBL" id="BA000028">
    <property type="protein sequence ID" value="BAC12738.1"/>
    <property type="molecule type" value="Genomic_DNA"/>
</dbReference>
<dbReference type="RefSeq" id="WP_011065190.1">
    <property type="nucleotide sequence ID" value="NC_004193.1"/>
</dbReference>
<dbReference type="SMR" id="Q8ES61"/>
<dbReference type="STRING" id="221109.gene:10733003"/>
<dbReference type="KEGG" id="oih:OB0782"/>
<dbReference type="eggNOG" id="COG2318">
    <property type="taxonomic scope" value="Bacteria"/>
</dbReference>
<dbReference type="HOGENOM" id="CLU_105789_1_0_9"/>
<dbReference type="OrthoDB" id="9796039at2"/>
<dbReference type="PhylomeDB" id="Q8ES61"/>
<dbReference type="Proteomes" id="UP000000822">
    <property type="component" value="Chromosome"/>
</dbReference>
<dbReference type="GO" id="GO:0005737">
    <property type="term" value="C:cytoplasm"/>
    <property type="evidence" value="ECO:0007669"/>
    <property type="project" value="UniProtKB-SubCell"/>
</dbReference>
<dbReference type="GO" id="GO:0016787">
    <property type="term" value="F:hydrolase activity"/>
    <property type="evidence" value="ECO:0007669"/>
    <property type="project" value="UniProtKB-UniRule"/>
</dbReference>
<dbReference type="GO" id="GO:0008270">
    <property type="term" value="F:zinc ion binding"/>
    <property type="evidence" value="ECO:0007669"/>
    <property type="project" value="UniProtKB-UniRule"/>
</dbReference>
<dbReference type="Gene3D" id="1.20.120.450">
    <property type="entry name" value="dinb family like domain"/>
    <property type="match status" value="1"/>
</dbReference>
<dbReference type="HAMAP" id="MF_01256">
    <property type="entry name" value="YfiT_hydrol"/>
    <property type="match status" value="1"/>
</dbReference>
<dbReference type="InterPro" id="IPR024775">
    <property type="entry name" value="DinB-like"/>
</dbReference>
<dbReference type="InterPro" id="IPR034660">
    <property type="entry name" value="DinB/YfiT-like"/>
</dbReference>
<dbReference type="InterPro" id="IPR023774">
    <property type="entry name" value="Put_metal_dep_hydrolase_YfiT"/>
</dbReference>
<dbReference type="NCBIfam" id="NF009807">
    <property type="entry name" value="PRK13291.1"/>
    <property type="match status" value="1"/>
</dbReference>
<dbReference type="Pfam" id="PF12867">
    <property type="entry name" value="DinB_2"/>
    <property type="match status" value="1"/>
</dbReference>
<dbReference type="SUPFAM" id="SSF109854">
    <property type="entry name" value="DinB/YfiT-like putative metalloenzymes"/>
    <property type="match status" value="1"/>
</dbReference>
<name>Y782_OCEIH</name>
<sequence>MNEKYPIGEFQFDGEITNIIINEWINEIEDLPRLLKNTVIDLNNEQLDTSYRSGGWTVRQVIHHLADSHMNAYIRLKLAITEENPVIKPYDEKEWAELYDYNLPIEISLSLIEALHKRWCSLLRDLSPTDMERTFKHPESGSISIGKNIGIYAWHGKHHLAHITSLCKRKDW</sequence>
<evidence type="ECO:0000255" key="1">
    <source>
        <dbReference type="HAMAP-Rule" id="MF_01256"/>
    </source>
</evidence>
<gene>
    <name type="ordered locus">OB0782</name>
</gene>
<proteinExistence type="inferred from homology"/>
<keyword id="KW-0963">Cytoplasm</keyword>
<keyword id="KW-0378">Hydrolase</keyword>
<keyword id="KW-0479">Metal-binding</keyword>
<keyword id="KW-1185">Reference proteome</keyword>
<keyword id="KW-0862">Zinc</keyword>
<accession>Q8ES61</accession>
<feature type="chain" id="PRO_0000162377" description="Putative metal-dependent hydrolase OB0782">
    <location>
        <begin position="1"/>
        <end position="172"/>
    </location>
</feature>
<feature type="binding site" evidence="1">
    <location>
        <position position="64"/>
    </location>
    <ligand>
        <name>Zn(2+)</name>
        <dbReference type="ChEBI" id="CHEBI:29105"/>
    </ligand>
</feature>
<feature type="binding site" evidence="1">
    <location>
        <position position="155"/>
    </location>
    <ligand>
        <name>Zn(2+)</name>
        <dbReference type="ChEBI" id="CHEBI:29105"/>
    </ligand>
</feature>
<feature type="binding site" evidence="1">
    <location>
        <position position="159"/>
    </location>
    <ligand>
        <name>Zn(2+)</name>
        <dbReference type="ChEBI" id="CHEBI:29105"/>
    </ligand>
</feature>
<protein>
    <recommendedName>
        <fullName evidence="1">Putative metal-dependent hydrolase OB0782</fullName>
        <ecNumber evidence="1">3.-.-.-</ecNumber>
    </recommendedName>
</protein>
<organism>
    <name type="scientific">Oceanobacillus iheyensis (strain DSM 14371 / CIP 107618 / JCM 11309 / KCTC 3954 / HTE831)</name>
    <dbReference type="NCBI Taxonomy" id="221109"/>
    <lineage>
        <taxon>Bacteria</taxon>
        <taxon>Bacillati</taxon>
        <taxon>Bacillota</taxon>
        <taxon>Bacilli</taxon>
        <taxon>Bacillales</taxon>
        <taxon>Bacillaceae</taxon>
        <taxon>Oceanobacillus</taxon>
    </lineage>
</organism>
<reference key="1">
    <citation type="journal article" date="2002" name="Nucleic Acids Res.">
        <title>Genome sequence of Oceanobacillus iheyensis isolated from the Iheya Ridge and its unexpected adaptive capabilities to extreme environments.</title>
        <authorList>
            <person name="Takami H."/>
            <person name="Takaki Y."/>
            <person name="Uchiyama I."/>
        </authorList>
    </citation>
    <scope>NUCLEOTIDE SEQUENCE [LARGE SCALE GENOMIC DNA]</scope>
    <source>
        <strain>DSM 14371 / CIP 107618 / JCM 11309 / KCTC 3954 / HTE831</strain>
    </source>
</reference>
<comment type="function">
    <text evidence="1">Possible metal-dependent hydrolase.</text>
</comment>
<comment type="cofactor">
    <cofactor evidence="1">
        <name>Zn(2+)</name>
        <dbReference type="ChEBI" id="CHEBI:29105"/>
    </cofactor>
    <text evidence="1">Binds 1 zinc ion per subunit.</text>
</comment>
<comment type="subunit">
    <text evidence="1">Homodimer.</text>
</comment>
<comment type="subcellular location">
    <subcellularLocation>
        <location evidence="1">Cytoplasm</location>
    </subcellularLocation>
</comment>
<comment type="similarity">
    <text evidence="1">Belongs to the metal hydrolase YfiT family.</text>
</comment>